<comment type="function">
    <text evidence="1">Functions in the biosynthesis of branched-chain amino acids. Catalyzes the dehydration of (2R,3R)-2,3-dihydroxy-3-methylpentanoate (2,3-dihydroxy-3-methylvalerate) into 2-oxo-3-methylpentanoate (2-oxo-3-methylvalerate) and of (2R)-2,3-dihydroxy-3-methylbutanoate (2,3-dihydroxyisovalerate) into 2-oxo-3-methylbutanoate (2-oxoisovalerate), the penultimate precursor to L-isoleucine and L-valine, respectively.</text>
</comment>
<comment type="catalytic activity">
    <reaction evidence="1">
        <text>(2R)-2,3-dihydroxy-3-methylbutanoate = 3-methyl-2-oxobutanoate + H2O</text>
        <dbReference type="Rhea" id="RHEA:24809"/>
        <dbReference type="ChEBI" id="CHEBI:11851"/>
        <dbReference type="ChEBI" id="CHEBI:15377"/>
        <dbReference type="ChEBI" id="CHEBI:49072"/>
        <dbReference type="EC" id="4.2.1.9"/>
    </reaction>
    <physiologicalReaction direction="left-to-right" evidence="1">
        <dbReference type="Rhea" id="RHEA:24810"/>
    </physiologicalReaction>
</comment>
<comment type="catalytic activity">
    <reaction evidence="1">
        <text>(2R,3R)-2,3-dihydroxy-3-methylpentanoate = (S)-3-methyl-2-oxopentanoate + H2O</text>
        <dbReference type="Rhea" id="RHEA:27694"/>
        <dbReference type="ChEBI" id="CHEBI:15377"/>
        <dbReference type="ChEBI" id="CHEBI:35146"/>
        <dbReference type="ChEBI" id="CHEBI:49258"/>
        <dbReference type="EC" id="4.2.1.9"/>
    </reaction>
    <physiologicalReaction direction="left-to-right" evidence="1">
        <dbReference type="Rhea" id="RHEA:27695"/>
    </physiologicalReaction>
</comment>
<comment type="cofactor">
    <cofactor evidence="1">
        <name>[2Fe-2S] cluster</name>
        <dbReference type="ChEBI" id="CHEBI:190135"/>
    </cofactor>
    <text evidence="1">Binds 1 [2Fe-2S] cluster per subunit. This cluster acts as a Lewis acid cofactor.</text>
</comment>
<comment type="cofactor">
    <cofactor evidence="1">
        <name>Mg(2+)</name>
        <dbReference type="ChEBI" id="CHEBI:18420"/>
    </cofactor>
</comment>
<comment type="pathway">
    <text evidence="1">Amino-acid biosynthesis; L-isoleucine biosynthesis; L-isoleucine from 2-oxobutanoate: step 3/4.</text>
</comment>
<comment type="pathway">
    <text evidence="1">Amino-acid biosynthesis; L-valine biosynthesis; L-valine from pyruvate: step 3/4.</text>
</comment>
<comment type="subunit">
    <text evidence="1">Homodimer.</text>
</comment>
<comment type="similarity">
    <text evidence="1">Belongs to the IlvD/Edd family.</text>
</comment>
<reference key="1">
    <citation type="journal article" date="2009" name="Environ. Microbiol.">
        <title>The genome of Polaromonas naphthalenivorans strain CJ2, isolated from coal tar-contaminated sediment, reveals physiological and metabolic versatility and evolution through extensive horizontal gene transfer.</title>
        <authorList>
            <person name="Yagi J.M."/>
            <person name="Sims D."/>
            <person name="Brettin T."/>
            <person name="Bruce D."/>
            <person name="Madsen E.L."/>
        </authorList>
    </citation>
    <scope>NUCLEOTIDE SEQUENCE [LARGE SCALE GENOMIC DNA]</scope>
    <source>
        <strain>CJ2</strain>
    </source>
</reference>
<dbReference type="EC" id="4.2.1.9" evidence="1"/>
<dbReference type="EMBL" id="CP000529">
    <property type="protein sequence ID" value="ABM38176.1"/>
    <property type="molecule type" value="Genomic_DNA"/>
</dbReference>
<dbReference type="RefSeq" id="WP_011802252.1">
    <property type="nucleotide sequence ID" value="NC_008781.1"/>
</dbReference>
<dbReference type="SMR" id="A1VR98"/>
<dbReference type="STRING" id="365044.Pnap_2877"/>
<dbReference type="KEGG" id="pna:Pnap_2877"/>
<dbReference type="eggNOG" id="COG0129">
    <property type="taxonomic scope" value="Bacteria"/>
</dbReference>
<dbReference type="HOGENOM" id="CLU_014271_4_2_4"/>
<dbReference type="OrthoDB" id="9807077at2"/>
<dbReference type="UniPathway" id="UPA00047">
    <property type="reaction ID" value="UER00057"/>
</dbReference>
<dbReference type="UniPathway" id="UPA00049">
    <property type="reaction ID" value="UER00061"/>
</dbReference>
<dbReference type="Proteomes" id="UP000000644">
    <property type="component" value="Chromosome"/>
</dbReference>
<dbReference type="GO" id="GO:0051537">
    <property type="term" value="F:2 iron, 2 sulfur cluster binding"/>
    <property type="evidence" value="ECO:0007669"/>
    <property type="project" value="UniProtKB-UniRule"/>
</dbReference>
<dbReference type="GO" id="GO:0004160">
    <property type="term" value="F:dihydroxy-acid dehydratase activity"/>
    <property type="evidence" value="ECO:0007669"/>
    <property type="project" value="UniProtKB-UniRule"/>
</dbReference>
<dbReference type="GO" id="GO:0000287">
    <property type="term" value="F:magnesium ion binding"/>
    <property type="evidence" value="ECO:0007669"/>
    <property type="project" value="UniProtKB-UniRule"/>
</dbReference>
<dbReference type="GO" id="GO:0009097">
    <property type="term" value="P:isoleucine biosynthetic process"/>
    <property type="evidence" value="ECO:0007669"/>
    <property type="project" value="UniProtKB-UniRule"/>
</dbReference>
<dbReference type="GO" id="GO:0009099">
    <property type="term" value="P:L-valine biosynthetic process"/>
    <property type="evidence" value="ECO:0007669"/>
    <property type="project" value="UniProtKB-UniRule"/>
</dbReference>
<dbReference type="FunFam" id="3.50.30.80:FF:000001">
    <property type="entry name" value="Dihydroxy-acid dehydratase"/>
    <property type="match status" value="1"/>
</dbReference>
<dbReference type="Gene3D" id="3.50.30.80">
    <property type="entry name" value="IlvD/EDD C-terminal domain-like"/>
    <property type="match status" value="1"/>
</dbReference>
<dbReference type="HAMAP" id="MF_00012">
    <property type="entry name" value="IlvD"/>
    <property type="match status" value="1"/>
</dbReference>
<dbReference type="InterPro" id="IPR050165">
    <property type="entry name" value="DHAD_IlvD/Edd"/>
</dbReference>
<dbReference type="InterPro" id="IPR042096">
    <property type="entry name" value="Dihydro-acid_dehy_C"/>
</dbReference>
<dbReference type="InterPro" id="IPR004404">
    <property type="entry name" value="DihydroxyA_deHydtase"/>
</dbReference>
<dbReference type="InterPro" id="IPR020558">
    <property type="entry name" value="DiOHA_6PGluconate_deHydtase_CS"/>
</dbReference>
<dbReference type="InterPro" id="IPR056740">
    <property type="entry name" value="ILV_EDD_C"/>
</dbReference>
<dbReference type="InterPro" id="IPR000581">
    <property type="entry name" value="ILV_EDD_N"/>
</dbReference>
<dbReference type="InterPro" id="IPR037237">
    <property type="entry name" value="IlvD/EDD_N"/>
</dbReference>
<dbReference type="NCBIfam" id="TIGR00110">
    <property type="entry name" value="ilvD"/>
    <property type="match status" value="1"/>
</dbReference>
<dbReference type="NCBIfam" id="NF002068">
    <property type="entry name" value="PRK00911.1"/>
    <property type="match status" value="1"/>
</dbReference>
<dbReference type="PANTHER" id="PTHR21000">
    <property type="entry name" value="DIHYDROXY-ACID DEHYDRATASE DAD"/>
    <property type="match status" value="1"/>
</dbReference>
<dbReference type="PANTHER" id="PTHR21000:SF5">
    <property type="entry name" value="DIHYDROXY-ACID DEHYDRATASE, MITOCHONDRIAL"/>
    <property type="match status" value="1"/>
</dbReference>
<dbReference type="Pfam" id="PF24877">
    <property type="entry name" value="ILV_EDD_C"/>
    <property type="match status" value="1"/>
</dbReference>
<dbReference type="Pfam" id="PF00920">
    <property type="entry name" value="ILVD_EDD_N"/>
    <property type="match status" value="1"/>
</dbReference>
<dbReference type="SUPFAM" id="SSF143975">
    <property type="entry name" value="IlvD/EDD N-terminal domain-like"/>
    <property type="match status" value="1"/>
</dbReference>
<dbReference type="SUPFAM" id="SSF52016">
    <property type="entry name" value="LeuD/IlvD-like"/>
    <property type="match status" value="1"/>
</dbReference>
<dbReference type="PROSITE" id="PS00886">
    <property type="entry name" value="ILVD_EDD_1"/>
    <property type="match status" value="1"/>
</dbReference>
<dbReference type="PROSITE" id="PS00887">
    <property type="entry name" value="ILVD_EDD_2"/>
    <property type="match status" value="1"/>
</dbReference>
<feature type="chain" id="PRO_0000321601" description="Dihydroxy-acid dehydratase">
    <location>
        <begin position="1"/>
        <end position="564"/>
    </location>
</feature>
<feature type="active site" description="Proton acceptor" evidence="1">
    <location>
        <position position="478"/>
    </location>
</feature>
<feature type="binding site" evidence="1">
    <location>
        <position position="55"/>
    </location>
    <ligand>
        <name>[2Fe-2S] cluster</name>
        <dbReference type="ChEBI" id="CHEBI:190135"/>
    </ligand>
</feature>
<feature type="binding site" evidence="1">
    <location>
        <position position="87"/>
    </location>
    <ligand>
        <name>Mg(2+)</name>
        <dbReference type="ChEBI" id="CHEBI:18420"/>
    </ligand>
</feature>
<feature type="binding site" evidence="1">
    <location>
        <position position="128"/>
    </location>
    <ligand>
        <name>[2Fe-2S] cluster</name>
        <dbReference type="ChEBI" id="CHEBI:190135"/>
    </ligand>
</feature>
<feature type="binding site" evidence="1">
    <location>
        <position position="129"/>
    </location>
    <ligand>
        <name>Mg(2+)</name>
        <dbReference type="ChEBI" id="CHEBI:18420"/>
    </ligand>
</feature>
<feature type="binding site" description="via carbamate group" evidence="1">
    <location>
        <position position="130"/>
    </location>
    <ligand>
        <name>Mg(2+)</name>
        <dbReference type="ChEBI" id="CHEBI:18420"/>
    </ligand>
</feature>
<feature type="binding site" evidence="1">
    <location>
        <position position="200"/>
    </location>
    <ligand>
        <name>[2Fe-2S] cluster</name>
        <dbReference type="ChEBI" id="CHEBI:190135"/>
    </ligand>
</feature>
<feature type="binding site" evidence="1">
    <location>
        <position position="452"/>
    </location>
    <ligand>
        <name>Mg(2+)</name>
        <dbReference type="ChEBI" id="CHEBI:18420"/>
    </ligand>
</feature>
<feature type="modified residue" description="N6-carboxylysine" evidence="1">
    <location>
        <position position="130"/>
    </location>
</feature>
<protein>
    <recommendedName>
        <fullName evidence="1">Dihydroxy-acid dehydratase</fullName>
        <shortName evidence="1">DAD</shortName>
        <ecNumber evidence="1">4.2.1.9</ecNumber>
    </recommendedName>
</protein>
<gene>
    <name evidence="1" type="primary">ilvD</name>
    <name type="ordered locus">Pnap_2877</name>
</gene>
<sequence length="564" mass="59238">METKVIAINRRSANITEGKSRAPNRSMYYAMGYEESDFKKPMIGVANGHSTITPCNSGLQKLADAAIDAIEEAGGNAQVFGTPTISDGMAMGTEGMKYSLVSREVISDCIETCVQGQWMDGVLVVGGCDKNMPGGLMGMLRANVPAIFVYGGTILPGHYQGKDLNIVSVFEAVGENAAGRMSDEDLLQIERRAIPGTGSCGGMYTANTMSSAFEALGISLPYSSTMANPHDEKLNSAKESARVLIEAVKKDIKPRDIVTKKSIENAVAVIMATGGSTNAVLHFLAIAHAAGVEWTIDDFERVRQKTPVLCNLKPSGQYLAVDLHQAGGIPQVMKMLLVAGLLHGDCITISGQTIAEVLADVPDAPRAGQDVIRPIDQPMYAQGHLAILKGNLSPEGCVAKITGLKNPVMTGPARVFEDEQSGLKAILDGKIVAGDVMVLRYLGPKGGPGMPEMLAPTGALIGAGLGESVGLITDGRFSGGTWGMVVGHVAPEAAAGGNIAFIEEGDSITIDANQLLLQLNISDAELESRKVGWTAPAPRYTRGVQAKFAFNASSASKGAVLDDY</sequence>
<name>ILVD_POLNA</name>
<evidence type="ECO:0000255" key="1">
    <source>
        <dbReference type="HAMAP-Rule" id="MF_00012"/>
    </source>
</evidence>
<keyword id="KW-0001">2Fe-2S</keyword>
<keyword id="KW-0028">Amino-acid biosynthesis</keyword>
<keyword id="KW-0100">Branched-chain amino acid biosynthesis</keyword>
<keyword id="KW-0408">Iron</keyword>
<keyword id="KW-0411">Iron-sulfur</keyword>
<keyword id="KW-0456">Lyase</keyword>
<keyword id="KW-0460">Magnesium</keyword>
<keyword id="KW-0479">Metal-binding</keyword>
<keyword id="KW-1185">Reference proteome</keyword>
<proteinExistence type="inferred from homology"/>
<organism>
    <name type="scientific">Polaromonas naphthalenivorans (strain CJ2)</name>
    <dbReference type="NCBI Taxonomy" id="365044"/>
    <lineage>
        <taxon>Bacteria</taxon>
        <taxon>Pseudomonadati</taxon>
        <taxon>Pseudomonadota</taxon>
        <taxon>Betaproteobacteria</taxon>
        <taxon>Burkholderiales</taxon>
        <taxon>Comamonadaceae</taxon>
        <taxon>Polaromonas</taxon>
    </lineage>
</organism>
<accession>A1VR98</accession>